<proteinExistence type="inferred from homology"/>
<dbReference type="EMBL" id="CP000283">
    <property type="protein sequence ID" value="ABE40415.1"/>
    <property type="molecule type" value="Genomic_DNA"/>
</dbReference>
<dbReference type="SMR" id="Q134S4"/>
<dbReference type="STRING" id="316057.RPD_3189"/>
<dbReference type="KEGG" id="rpd:RPD_3189"/>
<dbReference type="eggNOG" id="COG0048">
    <property type="taxonomic scope" value="Bacteria"/>
</dbReference>
<dbReference type="HOGENOM" id="CLU_104295_1_2_5"/>
<dbReference type="BioCyc" id="RPAL316057:RPD_RS16010-MONOMER"/>
<dbReference type="Proteomes" id="UP000001818">
    <property type="component" value="Chromosome"/>
</dbReference>
<dbReference type="GO" id="GO:0015935">
    <property type="term" value="C:small ribosomal subunit"/>
    <property type="evidence" value="ECO:0007669"/>
    <property type="project" value="InterPro"/>
</dbReference>
<dbReference type="GO" id="GO:0019843">
    <property type="term" value="F:rRNA binding"/>
    <property type="evidence" value="ECO:0007669"/>
    <property type="project" value="UniProtKB-UniRule"/>
</dbReference>
<dbReference type="GO" id="GO:0003735">
    <property type="term" value="F:structural constituent of ribosome"/>
    <property type="evidence" value="ECO:0007669"/>
    <property type="project" value="InterPro"/>
</dbReference>
<dbReference type="GO" id="GO:0000049">
    <property type="term" value="F:tRNA binding"/>
    <property type="evidence" value="ECO:0007669"/>
    <property type="project" value="UniProtKB-UniRule"/>
</dbReference>
<dbReference type="GO" id="GO:0006412">
    <property type="term" value="P:translation"/>
    <property type="evidence" value="ECO:0007669"/>
    <property type="project" value="UniProtKB-UniRule"/>
</dbReference>
<dbReference type="CDD" id="cd03368">
    <property type="entry name" value="Ribosomal_S12"/>
    <property type="match status" value="1"/>
</dbReference>
<dbReference type="FunFam" id="2.40.50.140:FF:000001">
    <property type="entry name" value="30S ribosomal protein S12"/>
    <property type="match status" value="1"/>
</dbReference>
<dbReference type="Gene3D" id="2.40.50.140">
    <property type="entry name" value="Nucleic acid-binding proteins"/>
    <property type="match status" value="1"/>
</dbReference>
<dbReference type="HAMAP" id="MF_00403_B">
    <property type="entry name" value="Ribosomal_uS12_B"/>
    <property type="match status" value="1"/>
</dbReference>
<dbReference type="InterPro" id="IPR012340">
    <property type="entry name" value="NA-bd_OB-fold"/>
</dbReference>
<dbReference type="InterPro" id="IPR006032">
    <property type="entry name" value="Ribosomal_uS12"/>
</dbReference>
<dbReference type="InterPro" id="IPR005679">
    <property type="entry name" value="Ribosomal_uS12_bac"/>
</dbReference>
<dbReference type="NCBIfam" id="TIGR00981">
    <property type="entry name" value="rpsL_bact"/>
    <property type="match status" value="1"/>
</dbReference>
<dbReference type="PANTHER" id="PTHR11652">
    <property type="entry name" value="30S RIBOSOMAL PROTEIN S12 FAMILY MEMBER"/>
    <property type="match status" value="1"/>
</dbReference>
<dbReference type="Pfam" id="PF00164">
    <property type="entry name" value="Ribosom_S12_S23"/>
    <property type="match status" value="1"/>
</dbReference>
<dbReference type="PIRSF" id="PIRSF002133">
    <property type="entry name" value="Ribosomal_S12/S23"/>
    <property type="match status" value="1"/>
</dbReference>
<dbReference type="PRINTS" id="PR01034">
    <property type="entry name" value="RIBOSOMALS12"/>
</dbReference>
<dbReference type="SUPFAM" id="SSF50249">
    <property type="entry name" value="Nucleic acid-binding proteins"/>
    <property type="match status" value="1"/>
</dbReference>
<dbReference type="PROSITE" id="PS00055">
    <property type="entry name" value="RIBOSOMAL_S12"/>
    <property type="match status" value="1"/>
</dbReference>
<keyword id="KW-0488">Methylation</keyword>
<keyword id="KW-0687">Ribonucleoprotein</keyword>
<keyword id="KW-0689">Ribosomal protein</keyword>
<keyword id="KW-0694">RNA-binding</keyword>
<keyword id="KW-0699">rRNA-binding</keyword>
<keyword id="KW-0820">tRNA-binding</keyword>
<sequence length="123" mass="13875">MPTINQLIANPRVVQKSRKKVPALQQSPQKRGVCTRVYTTTPKKPNSALRKVAKVRLTNGFEVIGYIPGEGHNLQEHSVVMIRGGRVKDLPGVRYHILRGVLDTQGVKNRKQRRSKYGAKRPK</sequence>
<organism>
    <name type="scientific">Rhodopseudomonas palustris (strain BisB5)</name>
    <dbReference type="NCBI Taxonomy" id="316057"/>
    <lineage>
        <taxon>Bacteria</taxon>
        <taxon>Pseudomonadati</taxon>
        <taxon>Pseudomonadota</taxon>
        <taxon>Alphaproteobacteria</taxon>
        <taxon>Hyphomicrobiales</taxon>
        <taxon>Nitrobacteraceae</taxon>
        <taxon>Rhodopseudomonas</taxon>
    </lineage>
</organism>
<reference key="1">
    <citation type="submission" date="2006-03" db="EMBL/GenBank/DDBJ databases">
        <title>Complete sequence of Rhodopseudomonas palustris BisB5.</title>
        <authorList>
            <consortium name="US DOE Joint Genome Institute"/>
            <person name="Copeland A."/>
            <person name="Lucas S."/>
            <person name="Lapidus A."/>
            <person name="Barry K."/>
            <person name="Detter J.C."/>
            <person name="Glavina del Rio T."/>
            <person name="Hammon N."/>
            <person name="Israni S."/>
            <person name="Dalin E."/>
            <person name="Tice H."/>
            <person name="Pitluck S."/>
            <person name="Chain P."/>
            <person name="Malfatti S."/>
            <person name="Shin M."/>
            <person name="Vergez L."/>
            <person name="Schmutz J."/>
            <person name="Larimer F."/>
            <person name="Land M."/>
            <person name="Hauser L."/>
            <person name="Pelletier D.A."/>
            <person name="Kyrpides N."/>
            <person name="Lykidis A."/>
            <person name="Oda Y."/>
            <person name="Harwood C.S."/>
            <person name="Richardson P."/>
        </authorList>
    </citation>
    <scope>NUCLEOTIDE SEQUENCE [LARGE SCALE GENOMIC DNA]</scope>
    <source>
        <strain>BisB5</strain>
    </source>
</reference>
<accession>Q134S4</accession>
<name>RS12_RHOPS</name>
<comment type="function">
    <text evidence="2">With S4 and S5 plays an important role in translational accuracy.</text>
</comment>
<comment type="function">
    <text evidence="2">Interacts with and stabilizes bases of the 16S rRNA that are involved in tRNA selection in the A site and with the mRNA backbone. Located at the interface of the 30S and 50S subunits, it traverses the body of the 30S subunit contacting proteins on the other side and probably holding the rRNA structure together. The combined cluster of proteins S8, S12 and S17 appears to hold together the shoulder and platform of the 30S subunit.</text>
</comment>
<comment type="subunit">
    <text evidence="2">Part of the 30S ribosomal subunit. Contacts proteins S8 and S17. May interact with IF1 in the 30S initiation complex.</text>
</comment>
<comment type="similarity">
    <text evidence="2">Belongs to the universal ribosomal protein uS12 family.</text>
</comment>
<protein>
    <recommendedName>
        <fullName evidence="2">Small ribosomal subunit protein uS12</fullName>
    </recommendedName>
    <alternativeName>
        <fullName evidence="3">30S ribosomal protein S12</fullName>
    </alternativeName>
</protein>
<feature type="chain" id="PRO_0000263583" description="Small ribosomal subunit protein uS12">
    <location>
        <begin position="1"/>
        <end position="123"/>
    </location>
</feature>
<feature type="modified residue" description="3-methylthioaspartic acid" evidence="1">
    <location>
        <position position="89"/>
    </location>
</feature>
<evidence type="ECO:0000250" key="1"/>
<evidence type="ECO:0000255" key="2">
    <source>
        <dbReference type="HAMAP-Rule" id="MF_00403"/>
    </source>
</evidence>
<evidence type="ECO:0000305" key="3"/>
<gene>
    <name evidence="2" type="primary">rpsL</name>
    <name type="ordered locus">RPD_3189</name>
</gene>